<keyword id="KW-0687">Ribonucleoprotein</keyword>
<keyword id="KW-0689">Ribosomal protein</keyword>
<keyword id="KW-0694">RNA-binding</keyword>
<keyword id="KW-0699">rRNA-binding</keyword>
<dbReference type="EMBL" id="CP000024">
    <property type="protein sequence ID" value="AAV63430.1"/>
    <property type="molecule type" value="Genomic_DNA"/>
</dbReference>
<dbReference type="RefSeq" id="WP_002946171.1">
    <property type="nucleotide sequence ID" value="NC_006449.1"/>
</dbReference>
<dbReference type="SMR" id="Q5LXS8"/>
<dbReference type="GeneID" id="66899645"/>
<dbReference type="KEGG" id="stc:str1917"/>
<dbReference type="HOGENOM" id="CLU_065898_2_2_9"/>
<dbReference type="GO" id="GO:0015935">
    <property type="term" value="C:small ribosomal subunit"/>
    <property type="evidence" value="ECO:0007669"/>
    <property type="project" value="InterPro"/>
</dbReference>
<dbReference type="GO" id="GO:0019843">
    <property type="term" value="F:rRNA binding"/>
    <property type="evidence" value="ECO:0007669"/>
    <property type="project" value="UniProtKB-UniRule"/>
</dbReference>
<dbReference type="GO" id="GO:0003735">
    <property type="term" value="F:structural constituent of ribosome"/>
    <property type="evidence" value="ECO:0007669"/>
    <property type="project" value="InterPro"/>
</dbReference>
<dbReference type="GO" id="GO:0006412">
    <property type="term" value="P:translation"/>
    <property type="evidence" value="ECO:0007669"/>
    <property type="project" value="UniProtKB-UniRule"/>
</dbReference>
<dbReference type="FunFam" id="3.30.160.20:FF:000001">
    <property type="entry name" value="30S ribosomal protein S5"/>
    <property type="match status" value="1"/>
</dbReference>
<dbReference type="FunFam" id="3.30.230.10:FF:000002">
    <property type="entry name" value="30S ribosomal protein S5"/>
    <property type="match status" value="1"/>
</dbReference>
<dbReference type="Gene3D" id="3.30.160.20">
    <property type="match status" value="1"/>
</dbReference>
<dbReference type="Gene3D" id="3.30.230.10">
    <property type="match status" value="1"/>
</dbReference>
<dbReference type="HAMAP" id="MF_01307_B">
    <property type="entry name" value="Ribosomal_uS5_B"/>
    <property type="match status" value="1"/>
</dbReference>
<dbReference type="InterPro" id="IPR020568">
    <property type="entry name" value="Ribosomal_Su5_D2-typ_SF"/>
</dbReference>
<dbReference type="InterPro" id="IPR000851">
    <property type="entry name" value="Ribosomal_uS5"/>
</dbReference>
<dbReference type="InterPro" id="IPR005712">
    <property type="entry name" value="Ribosomal_uS5_bac-type"/>
</dbReference>
<dbReference type="InterPro" id="IPR005324">
    <property type="entry name" value="Ribosomal_uS5_C"/>
</dbReference>
<dbReference type="InterPro" id="IPR013810">
    <property type="entry name" value="Ribosomal_uS5_N"/>
</dbReference>
<dbReference type="InterPro" id="IPR018192">
    <property type="entry name" value="Ribosomal_uS5_N_CS"/>
</dbReference>
<dbReference type="InterPro" id="IPR014721">
    <property type="entry name" value="Ribsml_uS5_D2-typ_fold_subgr"/>
</dbReference>
<dbReference type="NCBIfam" id="TIGR01021">
    <property type="entry name" value="rpsE_bact"/>
    <property type="match status" value="1"/>
</dbReference>
<dbReference type="PANTHER" id="PTHR48277">
    <property type="entry name" value="MITOCHONDRIAL RIBOSOMAL PROTEIN S5"/>
    <property type="match status" value="1"/>
</dbReference>
<dbReference type="PANTHER" id="PTHR48277:SF1">
    <property type="entry name" value="MITOCHONDRIAL RIBOSOMAL PROTEIN S5"/>
    <property type="match status" value="1"/>
</dbReference>
<dbReference type="Pfam" id="PF00333">
    <property type="entry name" value="Ribosomal_S5"/>
    <property type="match status" value="1"/>
</dbReference>
<dbReference type="Pfam" id="PF03719">
    <property type="entry name" value="Ribosomal_S5_C"/>
    <property type="match status" value="1"/>
</dbReference>
<dbReference type="SUPFAM" id="SSF54768">
    <property type="entry name" value="dsRNA-binding domain-like"/>
    <property type="match status" value="1"/>
</dbReference>
<dbReference type="SUPFAM" id="SSF54211">
    <property type="entry name" value="Ribosomal protein S5 domain 2-like"/>
    <property type="match status" value="1"/>
</dbReference>
<dbReference type="PROSITE" id="PS00585">
    <property type="entry name" value="RIBOSOMAL_S5"/>
    <property type="match status" value="1"/>
</dbReference>
<dbReference type="PROSITE" id="PS50881">
    <property type="entry name" value="S5_DSRBD"/>
    <property type="match status" value="1"/>
</dbReference>
<comment type="function">
    <text evidence="1">With S4 and S12 plays an important role in translational accuracy.</text>
</comment>
<comment type="function">
    <text evidence="1">Located at the back of the 30S subunit body where it stabilizes the conformation of the head with respect to the body.</text>
</comment>
<comment type="subunit">
    <text evidence="1">Part of the 30S ribosomal subunit. Contacts proteins S4 and S8.</text>
</comment>
<comment type="domain">
    <text>The N-terminal domain interacts with the head of the 30S subunit; the C-terminal domain interacts with the body and contacts protein S4. The interaction surface between S4 and S5 is involved in control of translational fidelity.</text>
</comment>
<comment type="similarity">
    <text evidence="1">Belongs to the universal ribosomal protein uS5 family.</text>
</comment>
<evidence type="ECO:0000255" key="1">
    <source>
        <dbReference type="HAMAP-Rule" id="MF_01307"/>
    </source>
</evidence>
<evidence type="ECO:0000305" key="2"/>
<gene>
    <name evidence="1" type="primary">rpsE</name>
    <name type="ordered locus">str1917</name>
</gene>
<sequence>MAFKDNAVELEERVVAINRVTKVVKGGRNMRFAALVVVGDRNGRVGFGTGKSQEVPEAIRKAVEAAKKNLIEVPMVGTTIPHEVRSEFGGAKVLLKPAVEGAGVAAGGAVRAVVELAGVADVTSKSLGSNTPINIVRATVEGLKQLKRAEEVAALRGISVSDLA</sequence>
<reference key="1">
    <citation type="journal article" date="2004" name="Nat. Biotechnol.">
        <title>Complete sequence and comparative genome analysis of the dairy bacterium Streptococcus thermophilus.</title>
        <authorList>
            <person name="Bolotin A."/>
            <person name="Quinquis B."/>
            <person name="Renault P."/>
            <person name="Sorokin A."/>
            <person name="Ehrlich S.D."/>
            <person name="Kulakauskas S."/>
            <person name="Lapidus A."/>
            <person name="Goltsman E."/>
            <person name="Mazur M."/>
            <person name="Pusch G.D."/>
            <person name="Fonstein M."/>
            <person name="Overbeek R."/>
            <person name="Kyprides N."/>
            <person name="Purnelle B."/>
            <person name="Prozzi D."/>
            <person name="Ngui K."/>
            <person name="Masuy D."/>
            <person name="Hancy F."/>
            <person name="Burteau S."/>
            <person name="Boutry M."/>
            <person name="Delcour J."/>
            <person name="Goffeau A."/>
            <person name="Hols P."/>
        </authorList>
    </citation>
    <scope>NUCLEOTIDE SEQUENCE [LARGE SCALE GENOMIC DNA]</scope>
    <source>
        <strain>CNRZ 1066</strain>
    </source>
</reference>
<name>RS5_STRT1</name>
<protein>
    <recommendedName>
        <fullName evidence="1">Small ribosomal subunit protein uS5</fullName>
    </recommendedName>
    <alternativeName>
        <fullName evidence="2">30S ribosomal protein S5</fullName>
    </alternativeName>
</protein>
<proteinExistence type="inferred from homology"/>
<organism>
    <name type="scientific">Streptococcus thermophilus (strain CNRZ 1066)</name>
    <dbReference type="NCBI Taxonomy" id="299768"/>
    <lineage>
        <taxon>Bacteria</taxon>
        <taxon>Bacillati</taxon>
        <taxon>Bacillota</taxon>
        <taxon>Bacilli</taxon>
        <taxon>Lactobacillales</taxon>
        <taxon>Streptococcaceae</taxon>
        <taxon>Streptococcus</taxon>
    </lineage>
</organism>
<accession>Q5LXS8</accession>
<feature type="chain" id="PRO_0000131612" description="Small ribosomal subunit protein uS5">
    <location>
        <begin position="1"/>
        <end position="164"/>
    </location>
</feature>
<feature type="domain" description="S5 DRBM" evidence="1">
    <location>
        <begin position="10"/>
        <end position="73"/>
    </location>
</feature>